<keyword id="KW-0113">Calvin cycle</keyword>
<keyword id="KW-0120">Carbon dioxide fixation</keyword>
<keyword id="KW-0456">Lyase</keyword>
<keyword id="KW-0460">Magnesium</keyword>
<keyword id="KW-0479">Metal-binding</keyword>
<keyword id="KW-0503">Monooxygenase</keyword>
<keyword id="KW-0560">Oxidoreductase</keyword>
<keyword id="KW-0602">Photosynthesis</keyword>
<keyword id="KW-1185">Reference proteome</keyword>
<accession>Q2IT03</accession>
<proteinExistence type="inferred from homology"/>
<reference key="1">
    <citation type="submission" date="2006-01" db="EMBL/GenBank/DDBJ databases">
        <title>Complete sequence of Rhodopseudomonas palustris HaA2.</title>
        <authorList>
            <consortium name="US DOE Joint Genome Institute"/>
            <person name="Copeland A."/>
            <person name="Lucas S."/>
            <person name="Lapidus A."/>
            <person name="Barry K."/>
            <person name="Detter J.C."/>
            <person name="Glavina T."/>
            <person name="Hammon N."/>
            <person name="Israni S."/>
            <person name="Pitluck S."/>
            <person name="Chain P."/>
            <person name="Malfatti S."/>
            <person name="Shin M."/>
            <person name="Vergez L."/>
            <person name="Schmutz J."/>
            <person name="Larimer F."/>
            <person name="Land M."/>
            <person name="Hauser L."/>
            <person name="Pelletier D.A."/>
            <person name="Kyrpides N."/>
            <person name="Anderson I."/>
            <person name="Oda Y."/>
            <person name="Harwood C.S."/>
            <person name="Richardson P."/>
        </authorList>
    </citation>
    <scope>NUCLEOTIDE SEQUENCE [LARGE SCALE GENOMIC DNA]</scope>
    <source>
        <strain>HaA2</strain>
    </source>
</reference>
<organism>
    <name type="scientific">Rhodopseudomonas palustris (strain HaA2)</name>
    <dbReference type="NCBI Taxonomy" id="316058"/>
    <lineage>
        <taxon>Bacteria</taxon>
        <taxon>Pseudomonadati</taxon>
        <taxon>Pseudomonadota</taxon>
        <taxon>Alphaproteobacteria</taxon>
        <taxon>Hyphomicrobiales</taxon>
        <taxon>Nitrobacteraceae</taxon>
        <taxon>Rhodopseudomonas</taxon>
    </lineage>
</organism>
<comment type="function">
    <text evidence="1">RuBisCO catalyzes two reactions: the carboxylation of D-ribulose 1,5-bisphosphate, the primary event in carbon dioxide fixation, as well as the oxidative fragmentation of the pentose substrate. Both reactions occur simultaneously and in competition at the same active site.</text>
</comment>
<comment type="catalytic activity">
    <reaction evidence="1">
        <text>2 (2R)-3-phosphoglycerate + 2 H(+) = D-ribulose 1,5-bisphosphate + CO2 + H2O</text>
        <dbReference type="Rhea" id="RHEA:23124"/>
        <dbReference type="ChEBI" id="CHEBI:15377"/>
        <dbReference type="ChEBI" id="CHEBI:15378"/>
        <dbReference type="ChEBI" id="CHEBI:16526"/>
        <dbReference type="ChEBI" id="CHEBI:57870"/>
        <dbReference type="ChEBI" id="CHEBI:58272"/>
        <dbReference type="EC" id="4.1.1.39"/>
    </reaction>
</comment>
<comment type="catalytic activity">
    <reaction evidence="1">
        <text>D-ribulose 1,5-bisphosphate + O2 = 2-phosphoglycolate + (2R)-3-phosphoglycerate + 2 H(+)</text>
        <dbReference type="Rhea" id="RHEA:36631"/>
        <dbReference type="ChEBI" id="CHEBI:15378"/>
        <dbReference type="ChEBI" id="CHEBI:15379"/>
        <dbReference type="ChEBI" id="CHEBI:57870"/>
        <dbReference type="ChEBI" id="CHEBI:58033"/>
        <dbReference type="ChEBI" id="CHEBI:58272"/>
    </reaction>
</comment>
<comment type="cofactor">
    <cofactor evidence="1">
        <name>Mg(2+)</name>
        <dbReference type="ChEBI" id="CHEBI:18420"/>
    </cofactor>
    <text evidence="1">Binds 1 Mg(2+) ion per subunit.</text>
</comment>
<comment type="subunit">
    <text evidence="1">Heterohexadecamer of 8 large chains and 8 small chains.</text>
</comment>
<comment type="miscellaneous">
    <text evidence="1">The basic functional RuBisCO is composed of a large chain homodimer in a 'head-to-tail' conformation. In form I RuBisCO this homodimer is arranged in a barrel-like tetramer with the small subunits forming a tetrameric 'cap' on each end of the 'barrel'.</text>
</comment>
<comment type="similarity">
    <text evidence="1">Belongs to the RuBisCO large chain family. Type I subfamily.</text>
</comment>
<sequence length="485" mass="53713">MNESVTVRGKDRYKSGVMEYKKMGYWEPDYEPKDTDVIALFRVTPQDGVDPIEASAAVAGESSTATWTVVWTDRLTAAEKYRAKCYRVDPVPNSPGQYFAYIAYDLDLFENGSIANLSASIIGNVFGFKPLKALRLEDMRLPVAYVKTFQGPATGIVVERERMDKFGRPLLGATVKPKLGLSGRNYGRVVYEALKGGLDFTKDDENINSQPFMHWRERFLYCMEAVNKAQAASGEIKGTYLNVTAGTMEEMYERAEFAKQLGSVIIMIDLVIGYTAIQSMAKWARKNDMILHLHRAGHSTYTRQRNHGVSFRVIAKWMRLAGVDHIHAGTVVGKLEGDPATTKGYYDICREDYNPANLEHGLFFDQHWASLNKLMPVASGGIHAGQMHQLLDLLGEDVVLQFGGGTIGHPMGIAAGATANRVALEAMILARNEGRDYVHEGPEILAKAAQTCTPLKAALDTWKNVSFNYESTDTPDYAPTPSVSV</sequence>
<feature type="chain" id="PRO_0000251456" description="Ribulose bisphosphate carboxylase large chain">
    <location>
        <begin position="1"/>
        <end position="485"/>
    </location>
</feature>
<feature type="active site" description="Proton acceptor" evidence="1">
    <location>
        <position position="176"/>
    </location>
</feature>
<feature type="active site" description="Proton acceptor" evidence="1">
    <location>
        <position position="294"/>
    </location>
</feature>
<feature type="binding site" description="in homodimeric partner" evidence="1">
    <location>
        <position position="124"/>
    </location>
    <ligand>
        <name>substrate</name>
    </ligand>
</feature>
<feature type="binding site" evidence="1">
    <location>
        <position position="174"/>
    </location>
    <ligand>
        <name>substrate</name>
    </ligand>
</feature>
<feature type="binding site" evidence="1">
    <location>
        <position position="178"/>
    </location>
    <ligand>
        <name>substrate</name>
    </ligand>
</feature>
<feature type="binding site" description="via carbamate group" evidence="1">
    <location>
        <position position="202"/>
    </location>
    <ligand>
        <name>Mg(2+)</name>
        <dbReference type="ChEBI" id="CHEBI:18420"/>
    </ligand>
</feature>
<feature type="binding site" evidence="1">
    <location>
        <position position="204"/>
    </location>
    <ligand>
        <name>Mg(2+)</name>
        <dbReference type="ChEBI" id="CHEBI:18420"/>
    </ligand>
</feature>
<feature type="binding site" evidence="1">
    <location>
        <position position="205"/>
    </location>
    <ligand>
        <name>Mg(2+)</name>
        <dbReference type="ChEBI" id="CHEBI:18420"/>
    </ligand>
</feature>
<feature type="binding site" evidence="1">
    <location>
        <position position="295"/>
    </location>
    <ligand>
        <name>substrate</name>
    </ligand>
</feature>
<feature type="binding site" evidence="1">
    <location>
        <position position="327"/>
    </location>
    <ligand>
        <name>substrate</name>
    </ligand>
</feature>
<feature type="binding site" evidence="1">
    <location>
        <position position="379"/>
    </location>
    <ligand>
        <name>substrate</name>
    </ligand>
</feature>
<feature type="site" description="Transition state stabilizer" evidence="1">
    <location>
        <position position="334"/>
    </location>
</feature>
<feature type="modified residue" description="N6-carboxylysine" evidence="1">
    <location>
        <position position="202"/>
    </location>
</feature>
<name>RBL_RHOP2</name>
<gene>
    <name evidence="1" type="primary">cbbL</name>
    <name type="ordered locus">RPB_3964</name>
</gene>
<dbReference type="EC" id="4.1.1.39" evidence="1"/>
<dbReference type="EMBL" id="CP000250">
    <property type="protein sequence ID" value="ABD08657.1"/>
    <property type="molecule type" value="Genomic_DNA"/>
</dbReference>
<dbReference type="RefSeq" id="WP_011442841.1">
    <property type="nucleotide sequence ID" value="NC_007778.1"/>
</dbReference>
<dbReference type="SMR" id="Q2IT03"/>
<dbReference type="STRING" id="316058.RPB_3964"/>
<dbReference type="KEGG" id="rpb:RPB_3964"/>
<dbReference type="eggNOG" id="COG1850">
    <property type="taxonomic scope" value="Bacteria"/>
</dbReference>
<dbReference type="HOGENOM" id="CLU_031450_2_0_5"/>
<dbReference type="OrthoDB" id="9764279at2"/>
<dbReference type="Proteomes" id="UP000008809">
    <property type="component" value="Chromosome"/>
</dbReference>
<dbReference type="GO" id="GO:0000287">
    <property type="term" value="F:magnesium ion binding"/>
    <property type="evidence" value="ECO:0007669"/>
    <property type="project" value="UniProtKB-UniRule"/>
</dbReference>
<dbReference type="GO" id="GO:0004497">
    <property type="term" value="F:monooxygenase activity"/>
    <property type="evidence" value="ECO:0007669"/>
    <property type="project" value="UniProtKB-KW"/>
</dbReference>
<dbReference type="GO" id="GO:0016984">
    <property type="term" value="F:ribulose-bisphosphate carboxylase activity"/>
    <property type="evidence" value="ECO:0007669"/>
    <property type="project" value="UniProtKB-UniRule"/>
</dbReference>
<dbReference type="GO" id="GO:0019253">
    <property type="term" value="P:reductive pentose-phosphate cycle"/>
    <property type="evidence" value="ECO:0007669"/>
    <property type="project" value="UniProtKB-UniRule"/>
</dbReference>
<dbReference type="CDD" id="cd08212">
    <property type="entry name" value="RuBisCO_large_I"/>
    <property type="match status" value="1"/>
</dbReference>
<dbReference type="Gene3D" id="3.20.20.110">
    <property type="entry name" value="Ribulose bisphosphate carboxylase, large subunit, C-terminal domain"/>
    <property type="match status" value="1"/>
</dbReference>
<dbReference type="Gene3D" id="3.30.70.150">
    <property type="entry name" value="RuBisCO large subunit, N-terminal domain"/>
    <property type="match status" value="1"/>
</dbReference>
<dbReference type="HAMAP" id="MF_01338">
    <property type="entry name" value="RuBisCO_L_type1"/>
    <property type="match status" value="1"/>
</dbReference>
<dbReference type="InterPro" id="IPR033966">
    <property type="entry name" value="RuBisCO"/>
</dbReference>
<dbReference type="InterPro" id="IPR020878">
    <property type="entry name" value="RuBisCo_large_chain_AS"/>
</dbReference>
<dbReference type="InterPro" id="IPR000685">
    <property type="entry name" value="RuBisCO_lsu_C"/>
</dbReference>
<dbReference type="InterPro" id="IPR036376">
    <property type="entry name" value="RuBisCO_lsu_C_sf"/>
</dbReference>
<dbReference type="InterPro" id="IPR017443">
    <property type="entry name" value="RuBisCO_lsu_fd_N"/>
</dbReference>
<dbReference type="InterPro" id="IPR036422">
    <property type="entry name" value="RuBisCO_lsu_N_sf"/>
</dbReference>
<dbReference type="InterPro" id="IPR020888">
    <property type="entry name" value="RuBisCO_lsuI"/>
</dbReference>
<dbReference type="NCBIfam" id="NF003252">
    <property type="entry name" value="PRK04208.1"/>
    <property type="match status" value="1"/>
</dbReference>
<dbReference type="PANTHER" id="PTHR42704">
    <property type="entry name" value="RIBULOSE BISPHOSPHATE CARBOXYLASE"/>
    <property type="match status" value="1"/>
</dbReference>
<dbReference type="PANTHER" id="PTHR42704:SF17">
    <property type="entry name" value="RIBULOSE BISPHOSPHATE CARBOXYLASE LARGE CHAIN"/>
    <property type="match status" value="1"/>
</dbReference>
<dbReference type="Pfam" id="PF00016">
    <property type="entry name" value="RuBisCO_large"/>
    <property type="match status" value="1"/>
</dbReference>
<dbReference type="Pfam" id="PF02788">
    <property type="entry name" value="RuBisCO_large_N"/>
    <property type="match status" value="1"/>
</dbReference>
<dbReference type="SFLD" id="SFLDG01052">
    <property type="entry name" value="RuBisCO"/>
    <property type="match status" value="1"/>
</dbReference>
<dbReference type="SFLD" id="SFLDS00014">
    <property type="entry name" value="RuBisCO"/>
    <property type="match status" value="1"/>
</dbReference>
<dbReference type="SFLD" id="SFLDG00301">
    <property type="entry name" value="RuBisCO-like_proteins"/>
    <property type="match status" value="1"/>
</dbReference>
<dbReference type="SUPFAM" id="SSF51649">
    <property type="entry name" value="RuBisCo, C-terminal domain"/>
    <property type="match status" value="1"/>
</dbReference>
<dbReference type="SUPFAM" id="SSF54966">
    <property type="entry name" value="RuBisCO, large subunit, small (N-terminal) domain"/>
    <property type="match status" value="1"/>
</dbReference>
<dbReference type="PROSITE" id="PS00157">
    <property type="entry name" value="RUBISCO_LARGE"/>
    <property type="match status" value="1"/>
</dbReference>
<evidence type="ECO:0000255" key="1">
    <source>
        <dbReference type="HAMAP-Rule" id="MF_01338"/>
    </source>
</evidence>
<protein>
    <recommendedName>
        <fullName evidence="1">Ribulose bisphosphate carboxylase large chain</fullName>
        <shortName evidence="1">RuBisCO large subunit</shortName>
        <ecNumber evidence="1">4.1.1.39</ecNumber>
    </recommendedName>
</protein>